<accession>Q81JV2</accession>
<accession>Q6HQF3</accession>
<accession>Q6KJS8</accession>
<evidence type="ECO:0000250" key="1"/>
<evidence type="ECO:0000255" key="2">
    <source>
        <dbReference type="HAMAP-Rule" id="MF_00606"/>
    </source>
</evidence>
<evidence type="ECO:0000305" key="3"/>
<organism>
    <name type="scientific">Bacillus anthracis</name>
    <dbReference type="NCBI Taxonomy" id="1392"/>
    <lineage>
        <taxon>Bacteria</taxon>
        <taxon>Bacillati</taxon>
        <taxon>Bacillota</taxon>
        <taxon>Bacilli</taxon>
        <taxon>Bacillales</taxon>
        <taxon>Bacillaceae</taxon>
        <taxon>Bacillus</taxon>
        <taxon>Bacillus cereus group</taxon>
    </lineage>
</organism>
<keyword id="KW-0227">DNA damage</keyword>
<keyword id="KW-0228">DNA excision</keyword>
<keyword id="KW-0234">DNA repair</keyword>
<keyword id="KW-0255">Endonuclease</keyword>
<keyword id="KW-0378">Hydrolase</keyword>
<keyword id="KW-0540">Nuclease</keyword>
<keyword id="KW-1185">Reference proteome</keyword>
<comment type="function">
    <text evidence="1">Component in a DNA repair pathway. Removal of UV LIGHT damaged nucleotides. Recognizes pyrimidine dimers and cleave a phosphodiester bond immediately 5' to the lesion (By similarity).</text>
</comment>
<comment type="similarity">
    <text evidence="2">Belongs to the uve1/UvsE family.</text>
</comment>
<comment type="sequence caution" evidence="3">
    <conflict type="erroneous initiation">
        <sequence resource="EMBL-CDS" id="AAP29234"/>
    </conflict>
</comment>
<comment type="sequence caution" evidence="3">
    <conflict type="erroneous initiation">
        <sequence resource="EMBL-CDS" id="AAT34738"/>
    </conflict>
</comment>
<comment type="sequence caution" evidence="3">
    <conflict type="erroneous initiation">
        <sequence resource="EMBL-CDS" id="AAT57485"/>
    </conflict>
</comment>
<name>UVSE_BACAN</name>
<feature type="chain" id="PRO_0000215031" description="UV DNA damage endonuclease">
    <location>
        <begin position="1"/>
        <end position="317"/>
    </location>
</feature>
<feature type="sequence conflict" description="In Ref. 3; AAT57485." evidence="3" ref="3">
    <original>C</original>
    <variation>Y</variation>
    <location>
        <position position="192"/>
    </location>
</feature>
<gene>
    <name evidence="2" type="primary">uvsE</name>
    <name type="ordered locus">BA_5592</name>
    <name type="ordered locus">GBAA_5592</name>
    <name type="ordered locus">BAS5196</name>
</gene>
<reference key="1">
    <citation type="journal article" date="2003" name="Nature">
        <title>The genome sequence of Bacillus anthracis Ames and comparison to closely related bacteria.</title>
        <authorList>
            <person name="Read T.D."/>
            <person name="Peterson S.N."/>
            <person name="Tourasse N.J."/>
            <person name="Baillie L.W."/>
            <person name="Paulsen I.T."/>
            <person name="Nelson K.E."/>
            <person name="Tettelin H."/>
            <person name="Fouts D.E."/>
            <person name="Eisen J.A."/>
            <person name="Gill S.R."/>
            <person name="Holtzapple E.K."/>
            <person name="Okstad O.A."/>
            <person name="Helgason E."/>
            <person name="Rilstone J."/>
            <person name="Wu M."/>
            <person name="Kolonay J.F."/>
            <person name="Beanan M.J."/>
            <person name="Dodson R.J."/>
            <person name="Brinkac L.M."/>
            <person name="Gwinn M.L."/>
            <person name="DeBoy R.T."/>
            <person name="Madpu R."/>
            <person name="Daugherty S.C."/>
            <person name="Durkin A.S."/>
            <person name="Haft D.H."/>
            <person name="Nelson W.C."/>
            <person name="Peterson J.D."/>
            <person name="Pop M."/>
            <person name="Khouri H.M."/>
            <person name="Radune D."/>
            <person name="Benton J.L."/>
            <person name="Mahamoud Y."/>
            <person name="Jiang L."/>
            <person name="Hance I.R."/>
            <person name="Weidman J.F."/>
            <person name="Berry K.J."/>
            <person name="Plaut R.D."/>
            <person name="Wolf A.M."/>
            <person name="Watkins K.L."/>
            <person name="Nierman W.C."/>
            <person name="Hazen A."/>
            <person name="Cline R.T."/>
            <person name="Redmond C."/>
            <person name="Thwaite J.E."/>
            <person name="White O."/>
            <person name="Salzberg S.L."/>
            <person name="Thomason B."/>
            <person name="Friedlander A.M."/>
            <person name="Koehler T.M."/>
            <person name="Hanna P.C."/>
            <person name="Kolstoe A.-B."/>
            <person name="Fraser C.M."/>
        </authorList>
    </citation>
    <scope>NUCLEOTIDE SEQUENCE [LARGE SCALE GENOMIC DNA]</scope>
    <source>
        <strain>Ames / isolate Porton</strain>
    </source>
</reference>
<reference key="2">
    <citation type="journal article" date="2009" name="J. Bacteriol.">
        <title>The complete genome sequence of Bacillus anthracis Ames 'Ancestor'.</title>
        <authorList>
            <person name="Ravel J."/>
            <person name="Jiang L."/>
            <person name="Stanley S.T."/>
            <person name="Wilson M.R."/>
            <person name="Decker R.S."/>
            <person name="Read T.D."/>
            <person name="Worsham P."/>
            <person name="Keim P.S."/>
            <person name="Salzberg S.L."/>
            <person name="Fraser-Liggett C.M."/>
            <person name="Rasko D.A."/>
        </authorList>
    </citation>
    <scope>NUCLEOTIDE SEQUENCE [LARGE SCALE GENOMIC DNA]</scope>
    <source>
        <strain>Ames ancestor</strain>
    </source>
</reference>
<reference key="3">
    <citation type="submission" date="2004-01" db="EMBL/GenBank/DDBJ databases">
        <title>Complete genome sequence of Bacillus anthracis Sterne.</title>
        <authorList>
            <person name="Brettin T.S."/>
            <person name="Bruce D."/>
            <person name="Challacombe J.F."/>
            <person name="Gilna P."/>
            <person name="Han C."/>
            <person name="Hill K."/>
            <person name="Hitchcock P."/>
            <person name="Jackson P."/>
            <person name="Keim P."/>
            <person name="Longmire J."/>
            <person name="Lucas S."/>
            <person name="Okinaka R."/>
            <person name="Richardson P."/>
            <person name="Rubin E."/>
            <person name="Tice H."/>
        </authorList>
    </citation>
    <scope>NUCLEOTIDE SEQUENCE [LARGE SCALE GENOMIC DNA]</scope>
    <source>
        <strain>Sterne</strain>
    </source>
</reference>
<proteinExistence type="inferred from homology"/>
<sequence length="317" mass="36818">MIMRFGYVSHAMALWDCSPAKTITFTSFQKLSKQEREDKLYDVTKQNLEHTIRILHYNIAHEIPLYRLSSSIVPLATHPEVEFDYIGAFTPLWRKIGALIKEHNLRISFHPNQFTLFTSDKPHITTNAITDMTYHYKVLDAIGIADSSYINIHVGGAYGNKEKAIERFHENIKKLPAHIKKQMTLENDDKTCTTAETLSICQKEKIPFVFDYHHHMANLCEEPLEELLPAIFETWSHTNIVPKVHISSPKSKKEFRAHAEYIDLEFIKPFLHVAKKINHNFDIMIESKQKDLAMLQFIQELSSIRGIKRISSSTLQW</sequence>
<protein>
    <recommendedName>
        <fullName evidence="2">UV DNA damage endonuclease</fullName>
        <shortName evidence="2">UV-endonuclease</shortName>
        <shortName evidence="2">UVED</shortName>
        <ecNumber evidence="2">3.-.-.-</ecNumber>
    </recommendedName>
</protein>
<dbReference type="EC" id="3.-.-.-" evidence="2"/>
<dbReference type="EMBL" id="AE016879">
    <property type="protein sequence ID" value="AAP29234.1"/>
    <property type="status" value="ALT_INIT"/>
    <property type="molecule type" value="Genomic_DNA"/>
</dbReference>
<dbReference type="EMBL" id="AE017334">
    <property type="protein sequence ID" value="AAT34738.1"/>
    <property type="status" value="ALT_INIT"/>
    <property type="molecule type" value="Genomic_DNA"/>
</dbReference>
<dbReference type="EMBL" id="AE017225">
    <property type="protein sequence ID" value="AAT57485.1"/>
    <property type="status" value="ALT_INIT"/>
    <property type="molecule type" value="Genomic_DNA"/>
</dbReference>
<dbReference type="RefSeq" id="NP_847748.1">
    <property type="nucleotide sequence ID" value="NC_003997.3"/>
</dbReference>
<dbReference type="RefSeq" id="WP_000605872.1">
    <property type="nucleotide sequence ID" value="NZ_WXXJ01000038.1"/>
</dbReference>
<dbReference type="SMR" id="Q81JV2"/>
<dbReference type="STRING" id="261594.GBAA_5592"/>
<dbReference type="DNASU" id="1085290"/>
<dbReference type="GeneID" id="45025177"/>
<dbReference type="KEGG" id="ban:BA_5592"/>
<dbReference type="KEGG" id="bar:GBAA_5592"/>
<dbReference type="KEGG" id="bat:BAS5196"/>
<dbReference type="PATRIC" id="fig|198094.11.peg.5550"/>
<dbReference type="eggNOG" id="COG4294">
    <property type="taxonomic scope" value="Bacteria"/>
</dbReference>
<dbReference type="HOGENOM" id="CLU_017168_0_1_9"/>
<dbReference type="OMA" id="VFDAHHH"/>
<dbReference type="OrthoDB" id="9782576at2"/>
<dbReference type="Proteomes" id="UP000000427">
    <property type="component" value="Chromosome"/>
</dbReference>
<dbReference type="Proteomes" id="UP000000594">
    <property type="component" value="Chromosome"/>
</dbReference>
<dbReference type="GO" id="GO:0004519">
    <property type="term" value="F:endonuclease activity"/>
    <property type="evidence" value="ECO:0007669"/>
    <property type="project" value="UniProtKB-UniRule"/>
</dbReference>
<dbReference type="GO" id="GO:0006289">
    <property type="term" value="P:nucleotide-excision repair"/>
    <property type="evidence" value="ECO:0007669"/>
    <property type="project" value="InterPro"/>
</dbReference>
<dbReference type="GO" id="GO:0006290">
    <property type="term" value="P:pyrimidine dimer repair"/>
    <property type="evidence" value="ECO:0007669"/>
    <property type="project" value="UniProtKB-UniRule"/>
</dbReference>
<dbReference type="GO" id="GO:0009411">
    <property type="term" value="P:response to UV"/>
    <property type="evidence" value="ECO:0007669"/>
    <property type="project" value="InterPro"/>
</dbReference>
<dbReference type="Gene3D" id="3.20.20.150">
    <property type="entry name" value="Divalent-metal-dependent TIM barrel enzymes"/>
    <property type="match status" value="1"/>
</dbReference>
<dbReference type="HAMAP" id="MF_00606">
    <property type="entry name" value="UV_endonuclease"/>
    <property type="match status" value="1"/>
</dbReference>
<dbReference type="InterPro" id="IPR004601">
    <property type="entry name" value="UvdE"/>
</dbReference>
<dbReference type="InterPro" id="IPR023520">
    <property type="entry name" value="UvdE_bac"/>
</dbReference>
<dbReference type="InterPro" id="IPR036237">
    <property type="entry name" value="Xyl_isomerase-like_sf"/>
</dbReference>
<dbReference type="NCBIfam" id="TIGR00629">
    <property type="entry name" value="uvde"/>
    <property type="match status" value="1"/>
</dbReference>
<dbReference type="PANTHER" id="PTHR31290">
    <property type="entry name" value="UV-DAMAGE ENDONUCLEASE"/>
    <property type="match status" value="1"/>
</dbReference>
<dbReference type="PANTHER" id="PTHR31290:SF5">
    <property type="entry name" value="UV-DAMAGE ENDONUCLEASE"/>
    <property type="match status" value="1"/>
</dbReference>
<dbReference type="Pfam" id="PF03851">
    <property type="entry name" value="UvdE"/>
    <property type="match status" value="1"/>
</dbReference>
<dbReference type="SUPFAM" id="SSF51658">
    <property type="entry name" value="Xylose isomerase-like"/>
    <property type="match status" value="1"/>
</dbReference>